<reference key="1">
    <citation type="submission" date="2007-11" db="EMBL/GenBank/DDBJ databases">
        <title>Complete sequence of Delftia acidovorans DSM 14801 / SPH-1.</title>
        <authorList>
            <person name="Copeland A."/>
            <person name="Lucas S."/>
            <person name="Lapidus A."/>
            <person name="Barry K."/>
            <person name="Glavina del Rio T."/>
            <person name="Dalin E."/>
            <person name="Tice H."/>
            <person name="Pitluck S."/>
            <person name="Lowry S."/>
            <person name="Clum A."/>
            <person name="Schmutz J."/>
            <person name="Larimer F."/>
            <person name="Land M."/>
            <person name="Hauser L."/>
            <person name="Kyrpides N."/>
            <person name="Kim E."/>
            <person name="Schleheck D."/>
            <person name="Richardson P."/>
        </authorList>
    </citation>
    <scope>NUCLEOTIDE SEQUENCE [LARGE SCALE GENOMIC DNA]</scope>
    <source>
        <strain>DSM 14801 / SPH-1</strain>
    </source>
</reference>
<proteinExistence type="inferred from homology"/>
<name>TPIS_DELAS</name>
<organism>
    <name type="scientific">Delftia acidovorans (strain DSM 14801 / SPH-1)</name>
    <dbReference type="NCBI Taxonomy" id="398578"/>
    <lineage>
        <taxon>Bacteria</taxon>
        <taxon>Pseudomonadati</taxon>
        <taxon>Pseudomonadota</taxon>
        <taxon>Betaproteobacteria</taxon>
        <taxon>Burkholderiales</taxon>
        <taxon>Comamonadaceae</taxon>
        <taxon>Delftia</taxon>
    </lineage>
</organism>
<dbReference type="EC" id="5.3.1.1" evidence="1"/>
<dbReference type="EMBL" id="CP000884">
    <property type="protein sequence ID" value="ABX37811.1"/>
    <property type="molecule type" value="Genomic_DNA"/>
</dbReference>
<dbReference type="RefSeq" id="WP_012206981.1">
    <property type="nucleotide sequence ID" value="NC_010002.1"/>
</dbReference>
<dbReference type="SMR" id="A9BNB6"/>
<dbReference type="STRING" id="398578.Daci_5182"/>
<dbReference type="GeneID" id="24116180"/>
<dbReference type="KEGG" id="dac:Daci_5182"/>
<dbReference type="eggNOG" id="COG0149">
    <property type="taxonomic scope" value="Bacteria"/>
</dbReference>
<dbReference type="HOGENOM" id="CLU_024251_2_1_4"/>
<dbReference type="UniPathway" id="UPA00109">
    <property type="reaction ID" value="UER00189"/>
</dbReference>
<dbReference type="UniPathway" id="UPA00138"/>
<dbReference type="Proteomes" id="UP000000784">
    <property type="component" value="Chromosome"/>
</dbReference>
<dbReference type="GO" id="GO:0005829">
    <property type="term" value="C:cytosol"/>
    <property type="evidence" value="ECO:0007669"/>
    <property type="project" value="TreeGrafter"/>
</dbReference>
<dbReference type="GO" id="GO:0004807">
    <property type="term" value="F:triose-phosphate isomerase activity"/>
    <property type="evidence" value="ECO:0007669"/>
    <property type="project" value="UniProtKB-UniRule"/>
</dbReference>
<dbReference type="GO" id="GO:0006094">
    <property type="term" value="P:gluconeogenesis"/>
    <property type="evidence" value="ECO:0007669"/>
    <property type="project" value="UniProtKB-UniRule"/>
</dbReference>
<dbReference type="GO" id="GO:0046166">
    <property type="term" value="P:glyceraldehyde-3-phosphate biosynthetic process"/>
    <property type="evidence" value="ECO:0007669"/>
    <property type="project" value="TreeGrafter"/>
</dbReference>
<dbReference type="GO" id="GO:0019563">
    <property type="term" value="P:glycerol catabolic process"/>
    <property type="evidence" value="ECO:0007669"/>
    <property type="project" value="TreeGrafter"/>
</dbReference>
<dbReference type="GO" id="GO:0006096">
    <property type="term" value="P:glycolytic process"/>
    <property type="evidence" value="ECO:0007669"/>
    <property type="project" value="UniProtKB-UniRule"/>
</dbReference>
<dbReference type="CDD" id="cd00311">
    <property type="entry name" value="TIM"/>
    <property type="match status" value="1"/>
</dbReference>
<dbReference type="FunFam" id="3.20.20.70:FF:000016">
    <property type="entry name" value="Triosephosphate isomerase"/>
    <property type="match status" value="1"/>
</dbReference>
<dbReference type="Gene3D" id="3.20.20.70">
    <property type="entry name" value="Aldolase class I"/>
    <property type="match status" value="1"/>
</dbReference>
<dbReference type="HAMAP" id="MF_00147_B">
    <property type="entry name" value="TIM_B"/>
    <property type="match status" value="1"/>
</dbReference>
<dbReference type="InterPro" id="IPR013785">
    <property type="entry name" value="Aldolase_TIM"/>
</dbReference>
<dbReference type="InterPro" id="IPR035990">
    <property type="entry name" value="TIM_sf"/>
</dbReference>
<dbReference type="InterPro" id="IPR022896">
    <property type="entry name" value="TrioseP_Isoase_bac/euk"/>
</dbReference>
<dbReference type="InterPro" id="IPR000652">
    <property type="entry name" value="Triosephosphate_isomerase"/>
</dbReference>
<dbReference type="InterPro" id="IPR020861">
    <property type="entry name" value="Triosephosphate_isomerase_AS"/>
</dbReference>
<dbReference type="NCBIfam" id="TIGR00419">
    <property type="entry name" value="tim"/>
    <property type="match status" value="1"/>
</dbReference>
<dbReference type="PANTHER" id="PTHR21139">
    <property type="entry name" value="TRIOSEPHOSPHATE ISOMERASE"/>
    <property type="match status" value="1"/>
</dbReference>
<dbReference type="PANTHER" id="PTHR21139:SF42">
    <property type="entry name" value="TRIOSEPHOSPHATE ISOMERASE"/>
    <property type="match status" value="1"/>
</dbReference>
<dbReference type="Pfam" id="PF00121">
    <property type="entry name" value="TIM"/>
    <property type="match status" value="1"/>
</dbReference>
<dbReference type="SUPFAM" id="SSF51351">
    <property type="entry name" value="Triosephosphate isomerase (TIM)"/>
    <property type="match status" value="1"/>
</dbReference>
<dbReference type="PROSITE" id="PS00171">
    <property type="entry name" value="TIM_1"/>
    <property type="match status" value="1"/>
</dbReference>
<dbReference type="PROSITE" id="PS51440">
    <property type="entry name" value="TIM_2"/>
    <property type="match status" value="1"/>
</dbReference>
<evidence type="ECO:0000255" key="1">
    <source>
        <dbReference type="HAMAP-Rule" id="MF_00147"/>
    </source>
</evidence>
<feature type="chain" id="PRO_1000096492" description="Triosephosphate isomerase">
    <location>
        <begin position="1"/>
        <end position="248"/>
    </location>
</feature>
<feature type="active site" description="Electrophile" evidence="1">
    <location>
        <position position="95"/>
    </location>
</feature>
<feature type="active site" description="Proton acceptor" evidence="1">
    <location>
        <position position="166"/>
    </location>
</feature>
<feature type="binding site" evidence="1">
    <location>
        <begin position="9"/>
        <end position="11"/>
    </location>
    <ligand>
        <name>substrate</name>
    </ligand>
</feature>
<feature type="binding site" evidence="1">
    <location>
        <position position="172"/>
    </location>
    <ligand>
        <name>substrate</name>
    </ligand>
</feature>
<feature type="binding site" evidence="1">
    <location>
        <position position="210"/>
    </location>
    <ligand>
        <name>substrate</name>
    </ligand>
</feature>
<feature type="binding site" evidence="1">
    <location>
        <begin position="231"/>
        <end position="232"/>
    </location>
    <ligand>
        <name>substrate</name>
    </ligand>
</feature>
<protein>
    <recommendedName>
        <fullName evidence="1">Triosephosphate isomerase</fullName>
        <shortName evidence="1">TIM</shortName>
        <shortName evidence="1">TPI</shortName>
        <ecNumber evidence="1">5.3.1.1</ecNumber>
    </recommendedName>
    <alternativeName>
        <fullName evidence="1">Triose-phosphate isomerase</fullName>
    </alternativeName>
</protein>
<accession>A9BNB6</accession>
<keyword id="KW-0963">Cytoplasm</keyword>
<keyword id="KW-0312">Gluconeogenesis</keyword>
<keyword id="KW-0324">Glycolysis</keyword>
<keyword id="KW-0413">Isomerase</keyword>
<keyword id="KW-1185">Reference proteome</keyword>
<gene>
    <name evidence="1" type="primary">tpiA</name>
    <name type="ordered locus">Daci_5182</name>
</gene>
<comment type="function">
    <text evidence="1">Involved in the gluconeogenesis. Catalyzes stereospecifically the conversion of dihydroxyacetone phosphate (DHAP) to D-glyceraldehyde-3-phosphate (G3P).</text>
</comment>
<comment type="catalytic activity">
    <reaction evidence="1">
        <text>D-glyceraldehyde 3-phosphate = dihydroxyacetone phosphate</text>
        <dbReference type="Rhea" id="RHEA:18585"/>
        <dbReference type="ChEBI" id="CHEBI:57642"/>
        <dbReference type="ChEBI" id="CHEBI:59776"/>
        <dbReference type="EC" id="5.3.1.1"/>
    </reaction>
</comment>
<comment type="pathway">
    <text evidence="1">Carbohydrate biosynthesis; gluconeogenesis.</text>
</comment>
<comment type="pathway">
    <text evidence="1">Carbohydrate degradation; glycolysis; D-glyceraldehyde 3-phosphate from glycerone phosphate: step 1/1.</text>
</comment>
<comment type="subunit">
    <text evidence="1">Homodimer.</text>
</comment>
<comment type="subcellular location">
    <subcellularLocation>
        <location evidence="1">Cytoplasm</location>
    </subcellularLocation>
</comment>
<comment type="similarity">
    <text evidence="1">Belongs to the triosephosphate isomerase family.</text>
</comment>
<sequence length="248" mass="25558">MKKKLIVGNWKMNGGLAANAVLLKALKEGLPEGGNAGVAVAVPAVYLAQAQAELEGSAIGVAAQDVSQHESGAYTGELSAAMLRDFGVRYTLVGHSERRQYHGETDAVVALKAQAALAKGVTPIVCVGETLAEREAGQTEEVVKRQLAAVIHQVGQCINELVVAYEPVWAIGTGRTATPEQAQQVHAVLRAQLAAASQQADRIALLYGGSMNASNAAQLLAQADIDGGLVGGASLKAADFLTIIAAAQ</sequence>